<organism>
    <name type="scientific">Legionella pneumophila (strain Lens)</name>
    <dbReference type="NCBI Taxonomy" id="297245"/>
    <lineage>
        <taxon>Bacteria</taxon>
        <taxon>Pseudomonadati</taxon>
        <taxon>Pseudomonadota</taxon>
        <taxon>Gammaproteobacteria</taxon>
        <taxon>Legionellales</taxon>
        <taxon>Legionellaceae</taxon>
        <taxon>Legionella</taxon>
    </lineage>
</organism>
<keyword id="KW-0378">Hydrolase</keyword>
<keyword id="KW-0460">Magnesium</keyword>
<keyword id="KW-0479">Metal-binding</keyword>
<keyword id="KW-0546">Nucleotide metabolism</keyword>
<keyword id="KW-0547">Nucleotide-binding</keyword>
<gene>
    <name type="ordered locus">lpl2404</name>
</gene>
<proteinExistence type="inferred from homology"/>
<sequence length="194" mass="20961">MKEIILATSNPGKIKELEQLLAPTLCIPQADLGISDAEETGLSFIENAILKARHASSLANKPALADDSGLVVPSLNGEPGIYSARYAGIKANDENNIQQLLSKMADLSQEQRQAYFFCAIALMQHAKDPTPLIATGVFHGVISVKPSGTNGFGYDPVFYLNEYQCTAAELPAKIKNRISHRAKALNQLRALLPD</sequence>
<evidence type="ECO:0000255" key="1">
    <source>
        <dbReference type="HAMAP-Rule" id="MF_01405"/>
    </source>
</evidence>
<dbReference type="EC" id="3.6.1.66" evidence="1"/>
<dbReference type="EMBL" id="CR628337">
    <property type="protein sequence ID" value="CAH16644.1"/>
    <property type="molecule type" value="Genomic_DNA"/>
</dbReference>
<dbReference type="RefSeq" id="WP_011216365.1">
    <property type="nucleotide sequence ID" value="NC_006369.1"/>
</dbReference>
<dbReference type="SMR" id="Q5WTW9"/>
<dbReference type="KEGG" id="lpf:lpl2404"/>
<dbReference type="LegioList" id="lpl2404"/>
<dbReference type="HOGENOM" id="CLU_082080_0_3_6"/>
<dbReference type="Proteomes" id="UP000002517">
    <property type="component" value="Chromosome"/>
</dbReference>
<dbReference type="GO" id="GO:0005829">
    <property type="term" value="C:cytosol"/>
    <property type="evidence" value="ECO:0007669"/>
    <property type="project" value="TreeGrafter"/>
</dbReference>
<dbReference type="GO" id="GO:0035870">
    <property type="term" value="F:dITP diphosphatase activity"/>
    <property type="evidence" value="ECO:0007669"/>
    <property type="project" value="RHEA"/>
</dbReference>
<dbReference type="GO" id="GO:0036220">
    <property type="term" value="F:ITP diphosphatase activity"/>
    <property type="evidence" value="ECO:0007669"/>
    <property type="project" value="UniProtKB-EC"/>
</dbReference>
<dbReference type="GO" id="GO:0046872">
    <property type="term" value="F:metal ion binding"/>
    <property type="evidence" value="ECO:0007669"/>
    <property type="project" value="UniProtKB-KW"/>
</dbReference>
<dbReference type="GO" id="GO:0000166">
    <property type="term" value="F:nucleotide binding"/>
    <property type="evidence" value="ECO:0007669"/>
    <property type="project" value="UniProtKB-KW"/>
</dbReference>
<dbReference type="GO" id="GO:0017111">
    <property type="term" value="F:ribonucleoside triphosphate phosphatase activity"/>
    <property type="evidence" value="ECO:0007669"/>
    <property type="project" value="InterPro"/>
</dbReference>
<dbReference type="GO" id="GO:0036222">
    <property type="term" value="F:XTP diphosphatase activity"/>
    <property type="evidence" value="ECO:0007669"/>
    <property type="project" value="RHEA"/>
</dbReference>
<dbReference type="GO" id="GO:0009117">
    <property type="term" value="P:nucleotide metabolic process"/>
    <property type="evidence" value="ECO:0007669"/>
    <property type="project" value="UniProtKB-KW"/>
</dbReference>
<dbReference type="GO" id="GO:0009146">
    <property type="term" value="P:purine nucleoside triphosphate catabolic process"/>
    <property type="evidence" value="ECO:0007669"/>
    <property type="project" value="UniProtKB-UniRule"/>
</dbReference>
<dbReference type="CDD" id="cd00515">
    <property type="entry name" value="HAM1"/>
    <property type="match status" value="1"/>
</dbReference>
<dbReference type="FunFam" id="3.90.950.10:FF:000001">
    <property type="entry name" value="dITP/XTP pyrophosphatase"/>
    <property type="match status" value="1"/>
</dbReference>
<dbReference type="Gene3D" id="3.90.950.10">
    <property type="match status" value="1"/>
</dbReference>
<dbReference type="HAMAP" id="MF_01405">
    <property type="entry name" value="Non_canon_purine_NTPase"/>
    <property type="match status" value="1"/>
</dbReference>
<dbReference type="InterPro" id="IPR020922">
    <property type="entry name" value="dITP/XTP_pyrophosphatase"/>
</dbReference>
<dbReference type="InterPro" id="IPR029001">
    <property type="entry name" value="ITPase-like_fam"/>
</dbReference>
<dbReference type="InterPro" id="IPR002637">
    <property type="entry name" value="RdgB/HAM1"/>
</dbReference>
<dbReference type="NCBIfam" id="TIGR00042">
    <property type="entry name" value="RdgB/HAM1 family non-canonical purine NTP pyrophosphatase"/>
    <property type="match status" value="1"/>
</dbReference>
<dbReference type="PANTHER" id="PTHR11067:SF9">
    <property type="entry name" value="INOSINE TRIPHOSPHATE PYROPHOSPHATASE"/>
    <property type="match status" value="1"/>
</dbReference>
<dbReference type="PANTHER" id="PTHR11067">
    <property type="entry name" value="INOSINE TRIPHOSPHATE PYROPHOSPHATASE/HAM1 PROTEIN"/>
    <property type="match status" value="1"/>
</dbReference>
<dbReference type="Pfam" id="PF01725">
    <property type="entry name" value="Ham1p_like"/>
    <property type="match status" value="1"/>
</dbReference>
<dbReference type="SUPFAM" id="SSF52972">
    <property type="entry name" value="ITPase-like"/>
    <property type="match status" value="1"/>
</dbReference>
<comment type="function">
    <text evidence="1">Pyrophosphatase that catalyzes the hydrolysis of nucleoside triphosphates to their monophosphate derivatives, with a high preference for the non-canonical purine nucleotides XTP (xanthosine triphosphate), dITP (deoxyinosine triphosphate) and ITP. Seems to function as a house-cleaning enzyme that removes non-canonical purine nucleotides from the nucleotide pool, thus preventing their incorporation into DNA/RNA and avoiding chromosomal lesions.</text>
</comment>
<comment type="catalytic activity">
    <reaction evidence="1">
        <text>XTP + H2O = XMP + diphosphate + H(+)</text>
        <dbReference type="Rhea" id="RHEA:28610"/>
        <dbReference type="ChEBI" id="CHEBI:15377"/>
        <dbReference type="ChEBI" id="CHEBI:15378"/>
        <dbReference type="ChEBI" id="CHEBI:33019"/>
        <dbReference type="ChEBI" id="CHEBI:57464"/>
        <dbReference type="ChEBI" id="CHEBI:61314"/>
        <dbReference type="EC" id="3.6.1.66"/>
    </reaction>
</comment>
<comment type="catalytic activity">
    <reaction evidence="1">
        <text>dITP + H2O = dIMP + diphosphate + H(+)</text>
        <dbReference type="Rhea" id="RHEA:28342"/>
        <dbReference type="ChEBI" id="CHEBI:15377"/>
        <dbReference type="ChEBI" id="CHEBI:15378"/>
        <dbReference type="ChEBI" id="CHEBI:33019"/>
        <dbReference type="ChEBI" id="CHEBI:61194"/>
        <dbReference type="ChEBI" id="CHEBI:61382"/>
        <dbReference type="EC" id="3.6.1.66"/>
    </reaction>
</comment>
<comment type="catalytic activity">
    <reaction evidence="1">
        <text>ITP + H2O = IMP + diphosphate + H(+)</text>
        <dbReference type="Rhea" id="RHEA:29399"/>
        <dbReference type="ChEBI" id="CHEBI:15377"/>
        <dbReference type="ChEBI" id="CHEBI:15378"/>
        <dbReference type="ChEBI" id="CHEBI:33019"/>
        <dbReference type="ChEBI" id="CHEBI:58053"/>
        <dbReference type="ChEBI" id="CHEBI:61402"/>
        <dbReference type="EC" id="3.6.1.66"/>
    </reaction>
</comment>
<comment type="cofactor">
    <cofactor evidence="1">
        <name>Mg(2+)</name>
        <dbReference type="ChEBI" id="CHEBI:18420"/>
    </cofactor>
    <text evidence="1">Binds 1 Mg(2+) ion per subunit.</text>
</comment>
<comment type="subunit">
    <text evidence="1">Homodimer.</text>
</comment>
<comment type="similarity">
    <text evidence="1">Belongs to the HAM1 NTPase family.</text>
</comment>
<reference key="1">
    <citation type="journal article" date="2004" name="Nat. Genet.">
        <title>Evidence in the Legionella pneumophila genome for exploitation of host cell functions and high genome plasticity.</title>
        <authorList>
            <person name="Cazalet C."/>
            <person name="Rusniok C."/>
            <person name="Brueggemann H."/>
            <person name="Zidane N."/>
            <person name="Magnier A."/>
            <person name="Ma L."/>
            <person name="Tichit M."/>
            <person name="Jarraud S."/>
            <person name="Bouchier C."/>
            <person name="Vandenesch F."/>
            <person name="Kunst F."/>
            <person name="Etienne J."/>
            <person name="Glaser P."/>
            <person name="Buchrieser C."/>
        </authorList>
    </citation>
    <scope>NUCLEOTIDE SEQUENCE [LARGE SCALE GENOMIC DNA]</scope>
    <source>
        <strain>Lens</strain>
    </source>
</reference>
<accession>Q5WTW9</accession>
<protein>
    <recommendedName>
        <fullName evidence="1">dITP/XTP pyrophosphatase</fullName>
        <ecNumber evidence="1">3.6.1.66</ecNumber>
    </recommendedName>
    <alternativeName>
        <fullName evidence="1">Non-canonical purine NTP pyrophosphatase</fullName>
    </alternativeName>
    <alternativeName>
        <fullName evidence="1">Non-standard purine NTP pyrophosphatase</fullName>
    </alternativeName>
    <alternativeName>
        <fullName evidence="1">Nucleoside-triphosphate diphosphatase</fullName>
    </alternativeName>
    <alternativeName>
        <fullName evidence="1">Nucleoside-triphosphate pyrophosphatase</fullName>
        <shortName evidence="1">NTPase</shortName>
    </alternativeName>
</protein>
<name>IXTPA_LEGPL</name>
<feature type="chain" id="PRO_0000178183" description="dITP/XTP pyrophosphatase">
    <location>
        <begin position="1"/>
        <end position="194"/>
    </location>
</feature>
<feature type="active site" description="Proton acceptor" evidence="1">
    <location>
        <position position="67"/>
    </location>
</feature>
<feature type="binding site" evidence="1">
    <location>
        <begin position="8"/>
        <end position="13"/>
    </location>
    <ligand>
        <name>substrate</name>
    </ligand>
</feature>
<feature type="binding site" evidence="1">
    <location>
        <position position="38"/>
    </location>
    <ligand>
        <name>Mg(2+)</name>
        <dbReference type="ChEBI" id="CHEBI:18420"/>
    </ligand>
</feature>
<feature type="binding site" evidence="1">
    <location>
        <position position="67"/>
    </location>
    <ligand>
        <name>Mg(2+)</name>
        <dbReference type="ChEBI" id="CHEBI:18420"/>
    </ligand>
</feature>
<feature type="binding site" evidence="1">
    <location>
        <position position="68"/>
    </location>
    <ligand>
        <name>substrate</name>
    </ligand>
</feature>
<feature type="binding site" evidence="1">
    <location>
        <begin position="152"/>
        <end position="155"/>
    </location>
    <ligand>
        <name>substrate</name>
    </ligand>
</feature>
<feature type="binding site" evidence="1">
    <location>
        <position position="175"/>
    </location>
    <ligand>
        <name>substrate</name>
    </ligand>
</feature>
<feature type="binding site" evidence="1">
    <location>
        <begin position="180"/>
        <end position="181"/>
    </location>
    <ligand>
        <name>substrate</name>
    </ligand>
</feature>